<protein>
    <recommendedName>
        <fullName evidence="1">4-hydroxy-tetrahydrodipicolinate reductase</fullName>
        <shortName evidence="1">HTPA reductase</shortName>
        <ecNumber evidence="1">1.17.1.8</ecNumber>
    </recommendedName>
</protein>
<gene>
    <name evidence="1" type="primary">dapB</name>
    <name type="ordered locus">CPR_1873</name>
</gene>
<sequence>MVKVILNGCSGKMGSVVSNLAETKFPNVEIVAGIDNNTMAQRSYPIFAKPEDCNVSYDVLLDFSRADALKSLVEFSKKTKKPLILCSTGYTAEDLKFIEESSKEIPLFRSANMSIGINLVNNLLKKVAPVLYENFDIELVERHHNQKVDAPSGTALLLAHTIQDSLNEETKLLYGREGIAKREKNEICVNTVRGGGIIGDHEVIFAGDGEVIEINHKAISRDVFAIGALKACEYMADKTKAGKYSMDDVLQLNF</sequence>
<reference key="1">
    <citation type="journal article" date="2006" name="Genome Res.">
        <title>Skewed genomic variability in strains of the toxigenic bacterial pathogen, Clostridium perfringens.</title>
        <authorList>
            <person name="Myers G.S.A."/>
            <person name="Rasko D.A."/>
            <person name="Cheung J.K."/>
            <person name="Ravel J."/>
            <person name="Seshadri R."/>
            <person name="DeBoy R.T."/>
            <person name="Ren Q."/>
            <person name="Varga J."/>
            <person name="Awad M.M."/>
            <person name="Brinkac L.M."/>
            <person name="Daugherty S.C."/>
            <person name="Haft D.H."/>
            <person name="Dodson R.J."/>
            <person name="Madupu R."/>
            <person name="Nelson W.C."/>
            <person name="Rosovitz M.J."/>
            <person name="Sullivan S.A."/>
            <person name="Khouri H."/>
            <person name="Dimitrov G.I."/>
            <person name="Watkins K.L."/>
            <person name="Mulligan S."/>
            <person name="Benton J."/>
            <person name="Radune D."/>
            <person name="Fisher D.J."/>
            <person name="Atkins H.S."/>
            <person name="Hiscox T."/>
            <person name="Jost B.H."/>
            <person name="Billington S.J."/>
            <person name="Songer J.G."/>
            <person name="McClane B.A."/>
            <person name="Titball R.W."/>
            <person name="Rood J.I."/>
            <person name="Melville S.B."/>
            <person name="Paulsen I.T."/>
        </authorList>
    </citation>
    <scope>NUCLEOTIDE SEQUENCE [LARGE SCALE GENOMIC DNA]</scope>
    <source>
        <strain>SM101 / Type A</strain>
    </source>
</reference>
<name>DAPB_CLOPS</name>
<evidence type="ECO:0000255" key="1">
    <source>
        <dbReference type="HAMAP-Rule" id="MF_00102"/>
    </source>
</evidence>
<evidence type="ECO:0000305" key="2"/>
<accession>Q0SRS4</accession>
<keyword id="KW-0028">Amino-acid biosynthesis</keyword>
<keyword id="KW-0963">Cytoplasm</keyword>
<keyword id="KW-0220">Diaminopimelate biosynthesis</keyword>
<keyword id="KW-0457">Lysine biosynthesis</keyword>
<keyword id="KW-0520">NAD</keyword>
<keyword id="KW-0521">NADP</keyword>
<keyword id="KW-0560">Oxidoreductase</keyword>
<organism>
    <name type="scientific">Clostridium perfringens (strain SM101 / Type A)</name>
    <dbReference type="NCBI Taxonomy" id="289380"/>
    <lineage>
        <taxon>Bacteria</taxon>
        <taxon>Bacillati</taxon>
        <taxon>Bacillota</taxon>
        <taxon>Clostridia</taxon>
        <taxon>Eubacteriales</taxon>
        <taxon>Clostridiaceae</taxon>
        <taxon>Clostridium</taxon>
    </lineage>
</organism>
<proteinExistence type="inferred from homology"/>
<feature type="chain" id="PRO_1000008558" description="4-hydroxy-tetrahydrodipicolinate reductase">
    <location>
        <begin position="1"/>
        <end position="254"/>
    </location>
</feature>
<feature type="active site" description="Proton donor/acceptor" evidence="1">
    <location>
        <position position="143"/>
    </location>
</feature>
<feature type="active site" description="Proton donor" evidence="1">
    <location>
        <position position="147"/>
    </location>
</feature>
<feature type="binding site" evidence="1">
    <location>
        <begin position="8"/>
        <end position="13"/>
    </location>
    <ligand>
        <name>NAD(+)</name>
        <dbReference type="ChEBI" id="CHEBI:57540"/>
    </ligand>
</feature>
<feature type="binding site" evidence="1">
    <location>
        <position position="35"/>
    </location>
    <ligand>
        <name>NAD(+)</name>
        <dbReference type="ChEBI" id="CHEBI:57540"/>
    </ligand>
</feature>
<feature type="binding site" evidence="1">
    <location>
        <begin position="86"/>
        <end position="88"/>
    </location>
    <ligand>
        <name>NAD(+)</name>
        <dbReference type="ChEBI" id="CHEBI:57540"/>
    </ligand>
</feature>
<feature type="binding site" evidence="1">
    <location>
        <begin position="110"/>
        <end position="113"/>
    </location>
    <ligand>
        <name>NAD(+)</name>
        <dbReference type="ChEBI" id="CHEBI:57540"/>
    </ligand>
</feature>
<feature type="binding site" evidence="1">
    <location>
        <position position="144"/>
    </location>
    <ligand>
        <name>(S)-2,3,4,5-tetrahydrodipicolinate</name>
        <dbReference type="ChEBI" id="CHEBI:16845"/>
    </ligand>
</feature>
<feature type="binding site" evidence="1">
    <location>
        <begin position="153"/>
        <end position="154"/>
    </location>
    <ligand>
        <name>(S)-2,3,4,5-tetrahydrodipicolinate</name>
        <dbReference type="ChEBI" id="CHEBI:16845"/>
    </ligand>
</feature>
<dbReference type="EC" id="1.17.1.8" evidence="1"/>
<dbReference type="EMBL" id="CP000312">
    <property type="protein sequence ID" value="ABG87273.1"/>
    <property type="molecule type" value="Genomic_DNA"/>
</dbReference>
<dbReference type="RefSeq" id="WP_011592755.1">
    <property type="nucleotide sequence ID" value="NC_008262.1"/>
</dbReference>
<dbReference type="SMR" id="Q0SRS4"/>
<dbReference type="KEGG" id="cpr:CPR_1873"/>
<dbReference type="UniPathway" id="UPA00034">
    <property type="reaction ID" value="UER00018"/>
</dbReference>
<dbReference type="Proteomes" id="UP000001824">
    <property type="component" value="Chromosome"/>
</dbReference>
<dbReference type="GO" id="GO:0005829">
    <property type="term" value="C:cytosol"/>
    <property type="evidence" value="ECO:0007669"/>
    <property type="project" value="TreeGrafter"/>
</dbReference>
<dbReference type="GO" id="GO:0008839">
    <property type="term" value="F:4-hydroxy-tetrahydrodipicolinate reductase"/>
    <property type="evidence" value="ECO:0007669"/>
    <property type="project" value="UniProtKB-EC"/>
</dbReference>
<dbReference type="GO" id="GO:0051287">
    <property type="term" value="F:NAD binding"/>
    <property type="evidence" value="ECO:0007669"/>
    <property type="project" value="UniProtKB-UniRule"/>
</dbReference>
<dbReference type="GO" id="GO:0050661">
    <property type="term" value="F:NADP binding"/>
    <property type="evidence" value="ECO:0007669"/>
    <property type="project" value="UniProtKB-UniRule"/>
</dbReference>
<dbReference type="GO" id="GO:0016726">
    <property type="term" value="F:oxidoreductase activity, acting on CH or CH2 groups, NAD or NADP as acceptor"/>
    <property type="evidence" value="ECO:0007669"/>
    <property type="project" value="UniProtKB-UniRule"/>
</dbReference>
<dbReference type="GO" id="GO:0019877">
    <property type="term" value="P:diaminopimelate biosynthetic process"/>
    <property type="evidence" value="ECO:0007669"/>
    <property type="project" value="UniProtKB-UniRule"/>
</dbReference>
<dbReference type="GO" id="GO:0009089">
    <property type="term" value="P:lysine biosynthetic process via diaminopimelate"/>
    <property type="evidence" value="ECO:0007669"/>
    <property type="project" value="UniProtKB-UniRule"/>
</dbReference>
<dbReference type="CDD" id="cd02274">
    <property type="entry name" value="DHDPR_N"/>
    <property type="match status" value="1"/>
</dbReference>
<dbReference type="FunFam" id="3.30.360.10:FF:000009">
    <property type="entry name" value="4-hydroxy-tetrahydrodipicolinate reductase"/>
    <property type="match status" value="1"/>
</dbReference>
<dbReference type="Gene3D" id="3.30.360.10">
    <property type="entry name" value="Dihydrodipicolinate Reductase, domain 2"/>
    <property type="match status" value="1"/>
</dbReference>
<dbReference type="Gene3D" id="3.40.50.720">
    <property type="entry name" value="NAD(P)-binding Rossmann-like Domain"/>
    <property type="match status" value="1"/>
</dbReference>
<dbReference type="HAMAP" id="MF_00102">
    <property type="entry name" value="DapB"/>
    <property type="match status" value="1"/>
</dbReference>
<dbReference type="InterPro" id="IPR022663">
    <property type="entry name" value="DapB_C"/>
</dbReference>
<dbReference type="InterPro" id="IPR000846">
    <property type="entry name" value="DapB_N"/>
</dbReference>
<dbReference type="InterPro" id="IPR022664">
    <property type="entry name" value="DapB_N_CS"/>
</dbReference>
<dbReference type="InterPro" id="IPR023940">
    <property type="entry name" value="DHDPR_bac"/>
</dbReference>
<dbReference type="InterPro" id="IPR036291">
    <property type="entry name" value="NAD(P)-bd_dom_sf"/>
</dbReference>
<dbReference type="NCBIfam" id="TIGR00036">
    <property type="entry name" value="dapB"/>
    <property type="match status" value="1"/>
</dbReference>
<dbReference type="PANTHER" id="PTHR20836:SF7">
    <property type="entry name" value="4-HYDROXY-TETRAHYDRODIPICOLINATE REDUCTASE"/>
    <property type="match status" value="1"/>
</dbReference>
<dbReference type="PANTHER" id="PTHR20836">
    <property type="entry name" value="DIHYDRODIPICOLINATE REDUCTASE"/>
    <property type="match status" value="1"/>
</dbReference>
<dbReference type="Pfam" id="PF05173">
    <property type="entry name" value="DapB_C"/>
    <property type="match status" value="1"/>
</dbReference>
<dbReference type="Pfam" id="PF01113">
    <property type="entry name" value="DapB_N"/>
    <property type="match status" value="1"/>
</dbReference>
<dbReference type="PIRSF" id="PIRSF000161">
    <property type="entry name" value="DHPR"/>
    <property type="match status" value="1"/>
</dbReference>
<dbReference type="SUPFAM" id="SSF55347">
    <property type="entry name" value="Glyceraldehyde-3-phosphate dehydrogenase-like, C-terminal domain"/>
    <property type="match status" value="1"/>
</dbReference>
<dbReference type="SUPFAM" id="SSF51735">
    <property type="entry name" value="NAD(P)-binding Rossmann-fold domains"/>
    <property type="match status" value="1"/>
</dbReference>
<dbReference type="PROSITE" id="PS01298">
    <property type="entry name" value="DAPB"/>
    <property type="match status" value="1"/>
</dbReference>
<comment type="function">
    <text evidence="1">Catalyzes the conversion of 4-hydroxy-tetrahydrodipicolinate (HTPA) to tetrahydrodipicolinate.</text>
</comment>
<comment type="catalytic activity">
    <reaction evidence="1">
        <text>(S)-2,3,4,5-tetrahydrodipicolinate + NAD(+) + H2O = (2S,4S)-4-hydroxy-2,3,4,5-tetrahydrodipicolinate + NADH + H(+)</text>
        <dbReference type="Rhea" id="RHEA:35323"/>
        <dbReference type="ChEBI" id="CHEBI:15377"/>
        <dbReference type="ChEBI" id="CHEBI:15378"/>
        <dbReference type="ChEBI" id="CHEBI:16845"/>
        <dbReference type="ChEBI" id="CHEBI:57540"/>
        <dbReference type="ChEBI" id="CHEBI:57945"/>
        <dbReference type="ChEBI" id="CHEBI:67139"/>
        <dbReference type="EC" id="1.17.1.8"/>
    </reaction>
</comment>
<comment type="catalytic activity">
    <reaction evidence="1">
        <text>(S)-2,3,4,5-tetrahydrodipicolinate + NADP(+) + H2O = (2S,4S)-4-hydroxy-2,3,4,5-tetrahydrodipicolinate + NADPH + H(+)</text>
        <dbReference type="Rhea" id="RHEA:35331"/>
        <dbReference type="ChEBI" id="CHEBI:15377"/>
        <dbReference type="ChEBI" id="CHEBI:15378"/>
        <dbReference type="ChEBI" id="CHEBI:16845"/>
        <dbReference type="ChEBI" id="CHEBI:57783"/>
        <dbReference type="ChEBI" id="CHEBI:58349"/>
        <dbReference type="ChEBI" id="CHEBI:67139"/>
        <dbReference type="EC" id="1.17.1.8"/>
    </reaction>
</comment>
<comment type="pathway">
    <text evidence="1">Amino-acid biosynthesis; L-lysine biosynthesis via DAP pathway; (S)-tetrahydrodipicolinate from L-aspartate: step 4/4.</text>
</comment>
<comment type="subcellular location">
    <subcellularLocation>
        <location evidence="1">Cytoplasm</location>
    </subcellularLocation>
</comment>
<comment type="similarity">
    <text evidence="1">Belongs to the DapB family.</text>
</comment>
<comment type="caution">
    <text evidence="2">Was originally thought to be a dihydrodipicolinate reductase (DHDPR), catalyzing the conversion of dihydrodipicolinate to tetrahydrodipicolinate. However, it was shown in E.coli that the substrate of the enzymatic reaction is not dihydrodipicolinate (DHDP) but in fact (2S,4S)-4-hydroxy-2,3,4,5-tetrahydrodipicolinic acid (HTPA), the product released by the DapA-catalyzed reaction.</text>
</comment>